<organism evidence="12">
    <name type="scientific">Arabidopsis thaliana</name>
    <name type="common">Mouse-ear cress</name>
    <dbReference type="NCBI Taxonomy" id="3702"/>
    <lineage>
        <taxon>Eukaryota</taxon>
        <taxon>Viridiplantae</taxon>
        <taxon>Streptophyta</taxon>
        <taxon>Embryophyta</taxon>
        <taxon>Tracheophyta</taxon>
        <taxon>Spermatophyta</taxon>
        <taxon>Magnoliopsida</taxon>
        <taxon>eudicotyledons</taxon>
        <taxon>Gunneridae</taxon>
        <taxon>Pentapetalae</taxon>
        <taxon>rosids</taxon>
        <taxon>malvids</taxon>
        <taxon>Brassicales</taxon>
        <taxon>Brassicaceae</taxon>
        <taxon>Camelineae</taxon>
        <taxon>Arabidopsis</taxon>
    </lineage>
</organism>
<comment type="function">
    <text evidence="4">Probable membrane-remodeling GTPase that plays a unique role in the in the determination of thylakoid and chloroplast morphology and regulates organization of the thylakoid network. Not involved in the determination of mitochondrial morphology or ultrastructure.</text>
</comment>
<comment type="subcellular location">
    <subcellularLocation>
        <location evidence="4">Plastid</location>
        <location evidence="4">Chloroplast inner membrane</location>
        <topology evidence="2">Multi-pass membrane protein</topology>
    </subcellularLocation>
    <subcellularLocation>
        <location evidence="4">Plastid</location>
        <location evidence="4">Chloroplast thylakoid membrane</location>
        <topology evidence="2">Multi-pass membrane protein</topology>
    </subcellularLocation>
    <text evidence="4">Localizes in a punctate pattern in chloroplasts.</text>
</comment>
<comment type="alternative products">
    <event type="alternative splicing"/>
    <isoform>
        <id>Q1KPV0-1</id>
        <name>1</name>
        <sequence type="displayed"/>
    </isoform>
    <isoform>
        <id>Q1KPV0-2</id>
        <name>2</name>
        <sequence type="described" ref="VSP_057783 VSP_057784"/>
    </isoform>
</comment>
<comment type="disruption phenotype">
    <text evidence="4 5">Pale green leaves phenotype and delayed flowering (PubMed:16617119). Decreased number of chloroplasts and heterogeneity in size in mature mesophyll cells (PubMed:16617119, PubMed:23963675). Abnormalities in chloroplast and thylakoid morphology, including disorganized grana stacks and alterations in the relative proportions of grana and stroma thylakoids (PubMed:16617119). Lesion mimic phenotype with activation of defense response markers in the ecotype Landsberg erecta (PubMed:23963675).</text>
</comment>
<comment type="similarity">
    <text evidence="7">Belongs to the TRAFAC class dynamin-like GTPase superfamily. Dynamin/Fzo/YdjA family. Mitofusin subfamily.</text>
</comment>
<comment type="sequence caution" evidence="7">
    <conflict type="erroneous gene model prediction">
        <sequence resource="EMBL-CDS" id="AAC72117"/>
    </conflict>
</comment>
<comment type="sequence caution" evidence="7">
    <conflict type="erroneous gene model prediction">
        <sequence resource="EMBL-CDS" id="AAD25810"/>
    </conflict>
</comment>
<sequence length="912" mass="100731">MRTLISHRQCVTSPFLISAASPPFPGRCFKLSSFTPPRHRRFSSLSIRNISHESADQTSSSRPRTLYPGGYKRPELAVPGLLLRLDADEVMSGNREETLDLVDRALAKSVQIVVIDGGATAGKLYEAACLLKSLVKGRAYLLIAERVDIASAVGASGVALSDEGLPAIVARNTLMGSNPDSVLLPLVARIVKDVDSALIASSSEGADFLILGSGEEDTQVADSLLKSVKIPIYVTCRGNEEAKEELQLLKSGVSGFVISLKDLRSSRDVALRQSLDGAYVVNNHETQNMNELPEKKNSAGFIKLEDKQKLIVEMEKSVLRETIEIIHKAAPLMEEVSLLIDAVSRIDEPFLMVIVGEFNSGKSTVINALLGKRYLKEGVVPTTNEITFLCYSDLESEEQQRCQTHPDGQYVCYLPAPILKDINIVDTPGTNVILQRQQRLTEEFVPRADLLVFVLSADRPLTESEVAFLRYTQQWKKKFVFILNKSDIYRDARELEEAISFVKENTRKLLNTENVILYPVSARSALEAKLSTASLVGRDDLEIADPGSNWRVQSFNELEKFLYSFLDSSTATGMERIRLKLETPMAIAERLLSSVEALVRQDCLAAREDLASADKIISRTKEYALKMEYESISWRRQALSLIDNARLQVVDLIGTTLRLSSLDLAISYVFKGEKSASVAATSKVQGEILAPALTNAKELLGKYAEWLQSNTAREGSLSLKSFENKWPTYVNSKTQLGIDTYDLLQKTDKVSLKTIQNLSAGTTSKRLEQDIREVFFVTVGGLGAAGLSASLLTSVLPTTLEDLLALGLCSAGGYVAIANFPYRRQAIIGKVNKVADALAQQLEDAMQKDLSDATSNLVNFVNIVAKPYREEAQLRLDRLLGIQKELSDIRSKLQLLQVDIDNLHVSRDEMRL</sequence>
<proteinExistence type="evidence at protein level"/>
<protein>
    <recommendedName>
        <fullName evidence="7">Probable transmembrane GTPase FZO-like, chloroplastic</fullName>
        <ecNumber>3.6.5.-</ecNumber>
    </recommendedName>
</protein>
<accession>Q1KPV0</accession>
<accession>Q67Z21</accession>
<accession>Q6NQ84</accession>
<accession>Q9SA53</accession>
<accession>Q9ZVR8</accession>
<name>FZL_ARATH</name>
<feature type="transit peptide" description="Chloroplast" evidence="2">
    <location>
        <begin position="1"/>
        <end position="54"/>
    </location>
</feature>
<feature type="chain" id="PRO_0000433470" description="Probable transmembrane GTPase FZO-like, chloroplastic" evidence="2">
    <location>
        <begin position="55"/>
        <end position="912"/>
    </location>
</feature>
<feature type="topological domain" description="Stromal" evidence="8">
    <location>
        <begin position="55"/>
        <end position="773"/>
    </location>
</feature>
<feature type="transmembrane region" description="Helical" evidence="2">
    <location>
        <begin position="774"/>
        <end position="794"/>
    </location>
</feature>
<feature type="topological domain" description="Chloroplast intermembrane" evidence="8">
    <location>
        <begin position="795"/>
        <end position="801"/>
    </location>
</feature>
<feature type="transmembrane region" description="Helical" evidence="2">
    <location>
        <begin position="802"/>
        <end position="822"/>
    </location>
</feature>
<feature type="topological domain" description="Stromal" evidence="8">
    <location>
        <begin position="823"/>
        <end position="912"/>
    </location>
</feature>
<feature type="region of interest" description="Disordered" evidence="3">
    <location>
        <begin position="51"/>
        <end position="71"/>
    </location>
</feature>
<feature type="coiled-coil region" evidence="2">
    <location>
        <begin position="877"/>
        <end position="904"/>
    </location>
</feature>
<feature type="binding site" evidence="1">
    <location>
        <begin position="359"/>
        <end position="364"/>
    </location>
    <ligand>
        <name>GTP</name>
        <dbReference type="ChEBI" id="CHEBI:37565"/>
    </ligand>
</feature>
<feature type="binding site" evidence="1">
    <location>
        <position position="521"/>
    </location>
    <ligand>
        <name>GTP</name>
        <dbReference type="ChEBI" id="CHEBI:37565"/>
    </ligand>
</feature>
<feature type="splice variant" id="VSP_057783" description="In isoform 2.">
    <original>ELLGKYAEWLQSNTAREGSLSLKSFENKWPTYVNSKTQLGIDT</original>
    <variation>VSVMLYSLSIGLTGDMLVIYMRNCLENMLNGYNQILPVKGVCL</variation>
    <location>
        <begin position="698"/>
        <end position="740"/>
    </location>
</feature>
<feature type="splice variant" id="VSP_057784" description="In isoform 2.">
    <location>
        <begin position="741"/>
        <end position="912"/>
    </location>
</feature>
<feature type="mutagenesis site" description="Loss of function and no detection in punctate structures." evidence="4">
    <original>K</original>
    <variation>M</variation>
    <location>
        <position position="362"/>
    </location>
</feature>
<feature type="sequence conflict" description="In Ref. 5; AAQ65198." evidence="7" ref="5">
    <original>I</original>
    <variation>V</variation>
    <location>
        <position position="642"/>
    </location>
</feature>
<reference key="1">
    <citation type="journal article" date="2006" name="Proc. Natl. Acad. Sci. U.S.A.">
        <title>FZL, an FZO-like protein in plants, is a determinant of thylakoid and chloroplast morphology.</title>
        <authorList>
            <person name="Gao H."/>
            <person name="Sage T.L."/>
            <person name="Osteryoung K.W."/>
        </authorList>
    </citation>
    <scope>NUCLEOTIDE SEQUENCE [MRNA] (ISOFORM 1)</scope>
    <scope>FUNCTION</scope>
    <scope>SUBCELLULAR LOCATION</scope>
    <scope>MUTAGENESIS OF LYS-362</scope>
    <scope>DISRUPTION PHENOTYPE</scope>
    <source>
        <strain>cv. Columbia</strain>
    </source>
</reference>
<reference key="2">
    <citation type="journal article" date="2000" name="Nature">
        <title>Sequence and analysis of chromosome 1 of the plant Arabidopsis thaliana.</title>
        <authorList>
            <person name="Theologis A."/>
            <person name="Ecker J.R."/>
            <person name="Palm C.J."/>
            <person name="Federspiel N.A."/>
            <person name="Kaul S."/>
            <person name="White O."/>
            <person name="Alonso J."/>
            <person name="Altafi H."/>
            <person name="Araujo R."/>
            <person name="Bowman C.L."/>
            <person name="Brooks S.Y."/>
            <person name="Buehler E."/>
            <person name="Chan A."/>
            <person name="Chao Q."/>
            <person name="Chen H."/>
            <person name="Cheuk R.F."/>
            <person name="Chin C.W."/>
            <person name="Chung M.K."/>
            <person name="Conn L."/>
            <person name="Conway A.B."/>
            <person name="Conway A.R."/>
            <person name="Creasy T.H."/>
            <person name="Dewar K."/>
            <person name="Dunn P."/>
            <person name="Etgu P."/>
            <person name="Feldblyum T.V."/>
            <person name="Feng J.-D."/>
            <person name="Fong B."/>
            <person name="Fujii C.Y."/>
            <person name="Gill J.E."/>
            <person name="Goldsmith A.D."/>
            <person name="Haas B."/>
            <person name="Hansen N.F."/>
            <person name="Hughes B."/>
            <person name="Huizar L."/>
            <person name="Hunter J.L."/>
            <person name="Jenkins J."/>
            <person name="Johnson-Hopson C."/>
            <person name="Khan S."/>
            <person name="Khaykin E."/>
            <person name="Kim C.J."/>
            <person name="Koo H.L."/>
            <person name="Kremenetskaia I."/>
            <person name="Kurtz D.B."/>
            <person name="Kwan A."/>
            <person name="Lam B."/>
            <person name="Langin-Hooper S."/>
            <person name="Lee A."/>
            <person name="Lee J.M."/>
            <person name="Lenz C.A."/>
            <person name="Li J.H."/>
            <person name="Li Y.-P."/>
            <person name="Lin X."/>
            <person name="Liu S.X."/>
            <person name="Liu Z.A."/>
            <person name="Luros J.S."/>
            <person name="Maiti R."/>
            <person name="Marziali A."/>
            <person name="Militscher J."/>
            <person name="Miranda M."/>
            <person name="Nguyen M."/>
            <person name="Nierman W.C."/>
            <person name="Osborne B.I."/>
            <person name="Pai G."/>
            <person name="Peterson J."/>
            <person name="Pham P.K."/>
            <person name="Rizzo M."/>
            <person name="Rooney T."/>
            <person name="Rowley D."/>
            <person name="Sakano H."/>
            <person name="Salzberg S.L."/>
            <person name="Schwartz J.R."/>
            <person name="Shinn P."/>
            <person name="Southwick A.M."/>
            <person name="Sun H."/>
            <person name="Tallon L.J."/>
            <person name="Tambunga G."/>
            <person name="Toriumi M.J."/>
            <person name="Town C.D."/>
            <person name="Utterback T."/>
            <person name="Van Aken S."/>
            <person name="Vaysberg M."/>
            <person name="Vysotskaia V.S."/>
            <person name="Walker M."/>
            <person name="Wu D."/>
            <person name="Yu G."/>
            <person name="Fraser C.M."/>
            <person name="Venter J.C."/>
            <person name="Davis R.W."/>
        </authorList>
    </citation>
    <scope>NUCLEOTIDE SEQUENCE [LARGE SCALE GENOMIC DNA]</scope>
    <source>
        <strain>cv. Columbia</strain>
    </source>
</reference>
<reference key="3">
    <citation type="journal article" date="2017" name="Plant J.">
        <title>Araport11: a complete reannotation of the Arabidopsis thaliana reference genome.</title>
        <authorList>
            <person name="Cheng C.Y."/>
            <person name="Krishnakumar V."/>
            <person name="Chan A.P."/>
            <person name="Thibaud-Nissen F."/>
            <person name="Schobel S."/>
            <person name="Town C.D."/>
        </authorList>
    </citation>
    <scope>GENOME REANNOTATION</scope>
    <source>
        <strain>cv. Columbia</strain>
    </source>
</reference>
<reference key="4">
    <citation type="submission" date="2006-07" db="EMBL/GenBank/DDBJ databases">
        <title>Large-scale analysis of RIKEN Arabidopsis full-length (RAFL) cDNAs.</title>
        <authorList>
            <person name="Totoki Y."/>
            <person name="Seki M."/>
            <person name="Ishida J."/>
            <person name="Nakajima M."/>
            <person name="Enju A."/>
            <person name="Kamiya A."/>
            <person name="Narusaka M."/>
            <person name="Shin-i T."/>
            <person name="Nakagawa M."/>
            <person name="Sakamoto N."/>
            <person name="Oishi K."/>
            <person name="Kohara Y."/>
            <person name="Kobayashi M."/>
            <person name="Toyoda A."/>
            <person name="Sakaki Y."/>
            <person name="Sakurai T."/>
            <person name="Iida K."/>
            <person name="Akiyama K."/>
            <person name="Satou M."/>
            <person name="Toyoda T."/>
            <person name="Konagaya A."/>
            <person name="Carninci P."/>
            <person name="Kawai J."/>
            <person name="Hayashizaki Y."/>
            <person name="Shinozaki K."/>
        </authorList>
    </citation>
    <scope>NUCLEOTIDE SEQUENCE [LARGE SCALE MRNA] (ISOFORM 2)</scope>
    <source>
        <strain>cv. Columbia</strain>
    </source>
</reference>
<reference key="5">
    <citation type="journal article" date="2003" name="Science">
        <title>Empirical analysis of transcriptional activity in the Arabidopsis genome.</title>
        <authorList>
            <person name="Yamada K."/>
            <person name="Lim J."/>
            <person name="Dale J.M."/>
            <person name="Chen H."/>
            <person name="Shinn P."/>
            <person name="Palm C.J."/>
            <person name="Southwick A.M."/>
            <person name="Wu H.C."/>
            <person name="Kim C.J."/>
            <person name="Nguyen M."/>
            <person name="Pham P.K."/>
            <person name="Cheuk R.F."/>
            <person name="Karlin-Newmann G."/>
            <person name="Liu S.X."/>
            <person name="Lam B."/>
            <person name="Sakano H."/>
            <person name="Wu T."/>
            <person name="Yu G."/>
            <person name="Miranda M."/>
            <person name="Quach H.L."/>
            <person name="Tripp M."/>
            <person name="Chang C.H."/>
            <person name="Lee J.M."/>
            <person name="Toriumi M.J."/>
            <person name="Chan M.M."/>
            <person name="Tang C.C."/>
            <person name="Onodera C.S."/>
            <person name="Deng J.M."/>
            <person name="Akiyama K."/>
            <person name="Ansari Y."/>
            <person name="Arakawa T."/>
            <person name="Banh J."/>
            <person name="Banno F."/>
            <person name="Bowser L."/>
            <person name="Brooks S.Y."/>
            <person name="Carninci P."/>
            <person name="Chao Q."/>
            <person name="Choy N."/>
            <person name="Enju A."/>
            <person name="Goldsmith A.D."/>
            <person name="Gurjal M."/>
            <person name="Hansen N.F."/>
            <person name="Hayashizaki Y."/>
            <person name="Johnson-Hopson C."/>
            <person name="Hsuan V.W."/>
            <person name="Iida K."/>
            <person name="Karnes M."/>
            <person name="Khan S."/>
            <person name="Koesema E."/>
            <person name="Ishida J."/>
            <person name="Jiang P.X."/>
            <person name="Jones T."/>
            <person name="Kawai J."/>
            <person name="Kamiya A."/>
            <person name="Meyers C."/>
            <person name="Nakajima M."/>
            <person name="Narusaka M."/>
            <person name="Seki M."/>
            <person name="Sakurai T."/>
            <person name="Satou M."/>
            <person name="Tamse R."/>
            <person name="Vaysberg M."/>
            <person name="Wallender E.K."/>
            <person name="Wong C."/>
            <person name="Yamamura Y."/>
            <person name="Yuan S."/>
            <person name="Shinozaki K."/>
            <person name="Davis R.W."/>
            <person name="Theologis A."/>
            <person name="Ecker J.R."/>
        </authorList>
    </citation>
    <scope>NUCLEOTIDE SEQUENCE [LARGE SCALE MRNA] OF 1-642</scope>
    <source>
        <strain>cv. Columbia</strain>
    </source>
</reference>
<reference key="6">
    <citation type="journal article" date="2013" name="J. Exp. Bot.">
        <title>A mutation in the FZL gene of Arabidopsis causing alteration in chloroplast morphology results in a lesion mimic phenotype.</title>
        <authorList>
            <person name="Landoni M."/>
            <person name="De Francesco A."/>
            <person name="Bellatti S."/>
            <person name="Delledonne M."/>
            <person name="Ferrarini A."/>
            <person name="Venturini L."/>
            <person name="Pilu R."/>
            <person name="Bononi M."/>
            <person name="Tonelli C."/>
        </authorList>
    </citation>
    <scope>DISRUPTION PHENOTYPE</scope>
    <source>
        <strain>cv. Landsberg erecta</strain>
    </source>
</reference>
<evidence type="ECO:0000250" key="1">
    <source>
        <dbReference type="UniProtKB" id="Q8IWA4"/>
    </source>
</evidence>
<evidence type="ECO:0000255" key="2"/>
<evidence type="ECO:0000256" key="3">
    <source>
        <dbReference type="SAM" id="MobiDB-lite"/>
    </source>
</evidence>
<evidence type="ECO:0000269" key="4">
    <source>
    </source>
</evidence>
<evidence type="ECO:0000269" key="5">
    <source>
    </source>
</evidence>
<evidence type="ECO:0000303" key="6">
    <source>
    </source>
</evidence>
<evidence type="ECO:0000305" key="7"/>
<evidence type="ECO:0000305" key="8">
    <source>
    </source>
</evidence>
<evidence type="ECO:0000312" key="9">
    <source>
        <dbReference type="Araport" id="AT1G03160"/>
    </source>
</evidence>
<evidence type="ECO:0000312" key="10">
    <source>
        <dbReference type="EMBL" id="AAC72117.1"/>
    </source>
</evidence>
<evidence type="ECO:0000312" key="11">
    <source>
        <dbReference type="EMBL" id="AAD25810.1"/>
    </source>
</evidence>
<evidence type="ECO:0000312" key="12">
    <source>
        <dbReference type="EMBL" id="ABE96616.1"/>
    </source>
</evidence>
<keyword id="KW-0025">Alternative splicing</keyword>
<keyword id="KW-0150">Chloroplast</keyword>
<keyword id="KW-0175">Coiled coil</keyword>
<keyword id="KW-0217">Developmental protein</keyword>
<keyword id="KW-0342">GTP-binding</keyword>
<keyword id="KW-0378">Hydrolase</keyword>
<keyword id="KW-0472">Membrane</keyword>
<keyword id="KW-0547">Nucleotide-binding</keyword>
<keyword id="KW-0934">Plastid</keyword>
<keyword id="KW-1001">Plastid inner membrane</keyword>
<keyword id="KW-1185">Reference proteome</keyword>
<keyword id="KW-0793">Thylakoid</keyword>
<keyword id="KW-0809">Transit peptide</keyword>
<keyword id="KW-0812">Transmembrane</keyword>
<keyword id="KW-1133">Transmembrane helix</keyword>
<gene>
    <name evidence="6" type="primary">FZL</name>
    <name evidence="9" type="ordered locus">At1g03160</name>
    <name evidence="11" type="ORF">F10O3.1</name>
    <name evidence="10" type="ORF">F15K9.23</name>
</gene>
<dbReference type="EC" id="3.6.5.-"/>
<dbReference type="EMBL" id="DQ462573">
    <property type="protein sequence ID" value="ABE96616.1"/>
    <property type="molecule type" value="mRNA"/>
</dbReference>
<dbReference type="EMBL" id="AC005278">
    <property type="protein sequence ID" value="AAC72117.1"/>
    <property type="status" value="ALT_SEQ"/>
    <property type="molecule type" value="Genomic_DNA"/>
</dbReference>
<dbReference type="EMBL" id="AC006550">
    <property type="protein sequence ID" value="AAD25810.1"/>
    <property type="status" value="ALT_SEQ"/>
    <property type="molecule type" value="Genomic_DNA"/>
</dbReference>
<dbReference type="EMBL" id="CP002684">
    <property type="protein sequence ID" value="AEE27537.1"/>
    <property type="molecule type" value="Genomic_DNA"/>
</dbReference>
<dbReference type="EMBL" id="CP002684">
    <property type="protein sequence ID" value="AEE27538.1"/>
    <property type="molecule type" value="Genomic_DNA"/>
</dbReference>
<dbReference type="EMBL" id="AK176297">
    <property type="protein sequence ID" value="BAD44060.1"/>
    <property type="molecule type" value="mRNA"/>
</dbReference>
<dbReference type="EMBL" id="AK227660">
    <property type="protein sequence ID" value="BAE99647.1"/>
    <property type="molecule type" value="mRNA"/>
</dbReference>
<dbReference type="EMBL" id="BT010575">
    <property type="protein sequence ID" value="AAQ65198.1"/>
    <property type="molecule type" value="mRNA"/>
</dbReference>
<dbReference type="PIR" id="G86162">
    <property type="entry name" value="G86162"/>
</dbReference>
<dbReference type="PIR" id="H86162">
    <property type="entry name" value="H86162"/>
</dbReference>
<dbReference type="RefSeq" id="NP_001077452.1">
    <molecule id="Q1KPV0-2"/>
    <property type="nucleotide sequence ID" value="NM_001083983.1"/>
</dbReference>
<dbReference type="RefSeq" id="NP_171815.3">
    <molecule id="Q1KPV0-1"/>
    <property type="nucleotide sequence ID" value="NM_100198.5"/>
</dbReference>
<dbReference type="FunCoup" id="Q1KPV0">
    <property type="interactions" value="1074"/>
</dbReference>
<dbReference type="IntAct" id="Q1KPV0">
    <property type="interactions" value="7"/>
</dbReference>
<dbReference type="STRING" id="3702.Q1KPV0"/>
<dbReference type="GlyGen" id="Q1KPV0">
    <property type="glycosylation" value="1 site"/>
</dbReference>
<dbReference type="iPTMnet" id="Q1KPV0"/>
<dbReference type="PaxDb" id="3702-AT1G03160.1"/>
<dbReference type="ProteomicsDB" id="230051">
    <molecule id="Q1KPV0-1"/>
</dbReference>
<dbReference type="EnsemblPlants" id="AT1G03160.1">
    <molecule id="Q1KPV0-1"/>
    <property type="protein sequence ID" value="AT1G03160.1"/>
    <property type="gene ID" value="AT1G03160"/>
</dbReference>
<dbReference type="EnsemblPlants" id="AT1G03160.2">
    <molecule id="Q1KPV0-2"/>
    <property type="protein sequence ID" value="AT1G03160.2"/>
    <property type="gene ID" value="AT1G03160"/>
</dbReference>
<dbReference type="GeneID" id="839566"/>
<dbReference type="Gramene" id="AT1G03160.1">
    <molecule id="Q1KPV0-1"/>
    <property type="protein sequence ID" value="AT1G03160.1"/>
    <property type="gene ID" value="AT1G03160"/>
</dbReference>
<dbReference type="Gramene" id="AT1G03160.2">
    <molecule id="Q1KPV0-2"/>
    <property type="protein sequence ID" value="AT1G03160.2"/>
    <property type="gene ID" value="AT1G03160"/>
</dbReference>
<dbReference type="KEGG" id="ath:AT1G03160"/>
<dbReference type="Araport" id="AT1G03160"/>
<dbReference type="TAIR" id="AT1G03160">
    <property type="gene designation" value="FZL"/>
</dbReference>
<dbReference type="eggNOG" id="KOG0448">
    <property type="taxonomic scope" value="Eukaryota"/>
</dbReference>
<dbReference type="HOGENOM" id="CLU_014646_0_0_1"/>
<dbReference type="InParanoid" id="Q1KPV0"/>
<dbReference type="OMA" id="HFWEDVQ"/>
<dbReference type="PhylomeDB" id="Q1KPV0"/>
<dbReference type="PRO" id="PR:Q1KPV0"/>
<dbReference type="Proteomes" id="UP000006548">
    <property type="component" value="Chromosome 1"/>
</dbReference>
<dbReference type="ExpressionAtlas" id="Q1KPV0">
    <property type="expression patterns" value="baseline and differential"/>
</dbReference>
<dbReference type="GO" id="GO:0009507">
    <property type="term" value="C:chloroplast"/>
    <property type="evidence" value="ECO:0007005"/>
    <property type="project" value="TAIR"/>
</dbReference>
<dbReference type="GO" id="GO:0009706">
    <property type="term" value="C:chloroplast inner membrane"/>
    <property type="evidence" value="ECO:0007669"/>
    <property type="project" value="UniProtKB-SubCell"/>
</dbReference>
<dbReference type="GO" id="GO:0031969">
    <property type="term" value="C:chloroplast membrane"/>
    <property type="evidence" value="ECO:0000314"/>
    <property type="project" value="TAIR"/>
</dbReference>
<dbReference type="GO" id="GO:0009707">
    <property type="term" value="C:chloroplast outer membrane"/>
    <property type="evidence" value="ECO:0000314"/>
    <property type="project" value="TAIR"/>
</dbReference>
<dbReference type="GO" id="GO:0009535">
    <property type="term" value="C:chloroplast thylakoid membrane"/>
    <property type="evidence" value="ECO:0007669"/>
    <property type="project" value="UniProtKB-SubCell"/>
</dbReference>
<dbReference type="GO" id="GO:0005525">
    <property type="term" value="F:GTP binding"/>
    <property type="evidence" value="ECO:0007669"/>
    <property type="project" value="UniProtKB-KW"/>
</dbReference>
<dbReference type="GO" id="GO:0016787">
    <property type="term" value="F:hydrolase activity"/>
    <property type="evidence" value="ECO:0007669"/>
    <property type="project" value="UniProtKB-KW"/>
</dbReference>
<dbReference type="GO" id="GO:1900425">
    <property type="term" value="P:negative regulation of defense response to bacterium"/>
    <property type="evidence" value="ECO:0000315"/>
    <property type="project" value="TAIR"/>
</dbReference>
<dbReference type="GO" id="GO:0034051">
    <property type="term" value="P:negative regulation of plant-type hypersensitive response"/>
    <property type="evidence" value="ECO:0000315"/>
    <property type="project" value="TAIR"/>
</dbReference>
<dbReference type="GO" id="GO:0010027">
    <property type="term" value="P:thylakoid membrane organization"/>
    <property type="evidence" value="ECO:0000315"/>
    <property type="project" value="TAIR"/>
</dbReference>
<dbReference type="GO" id="GO:0010228">
    <property type="term" value="P:vegetative to reproductive phase transition of meristem"/>
    <property type="evidence" value="ECO:0000315"/>
    <property type="project" value="TAIR"/>
</dbReference>
<dbReference type="CDD" id="cd09912">
    <property type="entry name" value="DLP_2"/>
    <property type="match status" value="1"/>
</dbReference>
<dbReference type="FunFam" id="3.20.20.70:FF:000243">
    <property type="entry name" value="Probable transmembrane GTPase FZO-like, chloroplastic"/>
    <property type="match status" value="1"/>
</dbReference>
<dbReference type="FunFam" id="3.40.50.300:FF:001052">
    <property type="entry name" value="Probable transmembrane GTPase FZO-like, chloroplastic"/>
    <property type="match status" value="1"/>
</dbReference>
<dbReference type="Gene3D" id="3.20.20.70">
    <property type="entry name" value="Aldolase class I"/>
    <property type="match status" value="1"/>
</dbReference>
<dbReference type="Gene3D" id="3.40.50.300">
    <property type="entry name" value="P-loop containing nucleotide triphosphate hydrolases"/>
    <property type="match status" value="1"/>
</dbReference>
<dbReference type="InterPro" id="IPR013785">
    <property type="entry name" value="Aldolase_TIM"/>
</dbReference>
<dbReference type="InterPro" id="IPR006073">
    <property type="entry name" value="GTP-bd"/>
</dbReference>
<dbReference type="InterPro" id="IPR027417">
    <property type="entry name" value="P-loop_NTPase"/>
</dbReference>
<dbReference type="InterPro" id="IPR036206">
    <property type="entry name" value="ThiamineP_synth_sf"/>
</dbReference>
<dbReference type="InterPro" id="IPR051943">
    <property type="entry name" value="TRAFAC_Dynamin-like_GTPase"/>
</dbReference>
<dbReference type="PANTHER" id="PTHR43681:SF1">
    <property type="entry name" value="SARCALUMENIN"/>
    <property type="match status" value="1"/>
</dbReference>
<dbReference type="PANTHER" id="PTHR43681">
    <property type="entry name" value="TRANSMEMBRANE GTPASE FZO"/>
    <property type="match status" value="1"/>
</dbReference>
<dbReference type="Pfam" id="PF01926">
    <property type="entry name" value="MMR_HSR1"/>
    <property type="match status" value="1"/>
</dbReference>
<dbReference type="SUPFAM" id="SSF52540">
    <property type="entry name" value="P-loop containing nucleoside triphosphate hydrolases"/>
    <property type="match status" value="1"/>
</dbReference>
<dbReference type="SUPFAM" id="SSF51391">
    <property type="entry name" value="Thiamin phosphate synthase"/>
    <property type="match status" value="1"/>
</dbReference>